<feature type="chain" id="PRO_0000189758" description="Gamma-glutamyl phosphate reductase">
    <location>
        <begin position="1"/>
        <end position="421"/>
    </location>
</feature>
<dbReference type="EC" id="1.2.1.41" evidence="1"/>
<dbReference type="EMBL" id="AP006618">
    <property type="protein sequence ID" value="BAD56216.1"/>
    <property type="molecule type" value="Genomic_DNA"/>
</dbReference>
<dbReference type="RefSeq" id="WP_011207901.1">
    <property type="nucleotide sequence ID" value="NC_006361.1"/>
</dbReference>
<dbReference type="SMR" id="Q5Z025"/>
<dbReference type="STRING" id="247156.NFA_13710"/>
<dbReference type="GeneID" id="61132193"/>
<dbReference type="KEGG" id="nfa:NFA_13710"/>
<dbReference type="eggNOG" id="COG0014">
    <property type="taxonomic scope" value="Bacteria"/>
</dbReference>
<dbReference type="HOGENOM" id="CLU_030231_0_0_11"/>
<dbReference type="OrthoDB" id="9809970at2"/>
<dbReference type="UniPathway" id="UPA00098">
    <property type="reaction ID" value="UER00360"/>
</dbReference>
<dbReference type="Proteomes" id="UP000006820">
    <property type="component" value="Chromosome"/>
</dbReference>
<dbReference type="GO" id="GO:0005737">
    <property type="term" value="C:cytoplasm"/>
    <property type="evidence" value="ECO:0007669"/>
    <property type="project" value="UniProtKB-SubCell"/>
</dbReference>
<dbReference type="GO" id="GO:0004350">
    <property type="term" value="F:glutamate-5-semialdehyde dehydrogenase activity"/>
    <property type="evidence" value="ECO:0007669"/>
    <property type="project" value="UniProtKB-UniRule"/>
</dbReference>
<dbReference type="GO" id="GO:0050661">
    <property type="term" value="F:NADP binding"/>
    <property type="evidence" value="ECO:0007669"/>
    <property type="project" value="InterPro"/>
</dbReference>
<dbReference type="GO" id="GO:0055129">
    <property type="term" value="P:L-proline biosynthetic process"/>
    <property type="evidence" value="ECO:0007669"/>
    <property type="project" value="UniProtKB-UniRule"/>
</dbReference>
<dbReference type="CDD" id="cd07079">
    <property type="entry name" value="ALDH_F18-19_ProA-GPR"/>
    <property type="match status" value="1"/>
</dbReference>
<dbReference type="FunFam" id="3.40.309.10:FF:000006">
    <property type="entry name" value="Gamma-glutamyl phosphate reductase"/>
    <property type="match status" value="1"/>
</dbReference>
<dbReference type="Gene3D" id="3.40.605.10">
    <property type="entry name" value="Aldehyde Dehydrogenase, Chain A, domain 1"/>
    <property type="match status" value="1"/>
</dbReference>
<dbReference type="Gene3D" id="3.40.309.10">
    <property type="entry name" value="Aldehyde Dehydrogenase, Chain A, domain 2"/>
    <property type="match status" value="1"/>
</dbReference>
<dbReference type="HAMAP" id="MF_00412">
    <property type="entry name" value="ProA"/>
    <property type="match status" value="1"/>
</dbReference>
<dbReference type="InterPro" id="IPR016161">
    <property type="entry name" value="Ald_DH/histidinol_DH"/>
</dbReference>
<dbReference type="InterPro" id="IPR016163">
    <property type="entry name" value="Ald_DH_C"/>
</dbReference>
<dbReference type="InterPro" id="IPR016162">
    <property type="entry name" value="Ald_DH_N"/>
</dbReference>
<dbReference type="InterPro" id="IPR015590">
    <property type="entry name" value="Aldehyde_DH_dom"/>
</dbReference>
<dbReference type="InterPro" id="IPR020593">
    <property type="entry name" value="G-glutamylP_reductase_CS"/>
</dbReference>
<dbReference type="InterPro" id="IPR012134">
    <property type="entry name" value="Glu-5-SA_DH"/>
</dbReference>
<dbReference type="InterPro" id="IPR000965">
    <property type="entry name" value="GPR_dom"/>
</dbReference>
<dbReference type="NCBIfam" id="NF001221">
    <property type="entry name" value="PRK00197.1"/>
    <property type="match status" value="1"/>
</dbReference>
<dbReference type="NCBIfam" id="TIGR00407">
    <property type="entry name" value="proA"/>
    <property type="match status" value="1"/>
</dbReference>
<dbReference type="PANTHER" id="PTHR11063:SF8">
    <property type="entry name" value="DELTA-1-PYRROLINE-5-CARBOXYLATE SYNTHASE"/>
    <property type="match status" value="1"/>
</dbReference>
<dbReference type="PANTHER" id="PTHR11063">
    <property type="entry name" value="GLUTAMATE SEMIALDEHYDE DEHYDROGENASE"/>
    <property type="match status" value="1"/>
</dbReference>
<dbReference type="Pfam" id="PF00171">
    <property type="entry name" value="Aldedh"/>
    <property type="match status" value="1"/>
</dbReference>
<dbReference type="PIRSF" id="PIRSF000151">
    <property type="entry name" value="GPR"/>
    <property type="match status" value="1"/>
</dbReference>
<dbReference type="SUPFAM" id="SSF53720">
    <property type="entry name" value="ALDH-like"/>
    <property type="match status" value="1"/>
</dbReference>
<dbReference type="PROSITE" id="PS01223">
    <property type="entry name" value="PROA"/>
    <property type="match status" value="1"/>
</dbReference>
<reference key="1">
    <citation type="journal article" date="2004" name="Proc. Natl. Acad. Sci. U.S.A.">
        <title>The complete genomic sequence of Nocardia farcinica IFM 10152.</title>
        <authorList>
            <person name="Ishikawa J."/>
            <person name="Yamashita A."/>
            <person name="Mikami Y."/>
            <person name="Hoshino Y."/>
            <person name="Kurita H."/>
            <person name="Hotta K."/>
            <person name="Shiba T."/>
            <person name="Hattori M."/>
        </authorList>
    </citation>
    <scope>NUCLEOTIDE SEQUENCE [LARGE SCALE GENOMIC DNA]</scope>
    <source>
        <strain>IFM 10152</strain>
    </source>
</reference>
<accession>Q5Z025</accession>
<protein>
    <recommendedName>
        <fullName evidence="1">Gamma-glutamyl phosphate reductase</fullName>
        <shortName evidence="1">GPR</shortName>
        <ecNumber evidence="1">1.2.1.41</ecNumber>
    </recommendedName>
    <alternativeName>
        <fullName evidence="1">Glutamate-5-semialdehyde dehydrogenase</fullName>
    </alternativeName>
    <alternativeName>
        <fullName evidence="1">Glutamyl-gamma-semialdehyde dehydrogenase</fullName>
        <shortName evidence="1">GSA dehydrogenase</shortName>
    </alternativeName>
</protein>
<gene>
    <name evidence="1" type="primary">proA</name>
    <name type="ordered locus">NFA_13710</name>
</gene>
<proteinExistence type="inferred from homology"/>
<organism>
    <name type="scientific">Nocardia farcinica (strain IFM 10152)</name>
    <dbReference type="NCBI Taxonomy" id="247156"/>
    <lineage>
        <taxon>Bacteria</taxon>
        <taxon>Bacillati</taxon>
        <taxon>Actinomycetota</taxon>
        <taxon>Actinomycetes</taxon>
        <taxon>Mycobacteriales</taxon>
        <taxon>Nocardiaceae</taxon>
        <taxon>Nocardia</taxon>
    </lineage>
</organism>
<sequence length="421" mass="44021">MTVETTAEFDVREAVHEAARRARVASRALAQLTTAQKNDALHAAADTLLAAADTVLAANAEDIAAAEAAGTEASLLDRLRLTKARIDGIASGLRQVAGLPDPVGGVVRGSTLPNGLEIRQVRVPLGVVGMVYEARPNVTVDAFGLALKSGNAALLRGSSSAAKSNAALVEILREALRAQQIPADAVQLLPSHDRSSVTHLIQARGLVDVVIPRGGAGLINAVVRDAIVPTIETGTGNCHVYVHAAADLDMAEQILINAKTRRPSVCNAAETVLIDRAVADTAVPRLTAALREHGVTIHGDLPGLVPATDTDWGEEYLTLDIALKVVDNLDAAVEHINTWGTGHTEAIVTGDLAAAREFTSRVDAAAVMVNASTAFTDGEQFGFGAEIGISTQKLHARGPMALPELTSTKWIVWGEGQIRPV</sequence>
<comment type="function">
    <text evidence="1">Catalyzes the NADPH-dependent reduction of L-glutamate 5-phosphate into L-glutamate 5-semialdehyde and phosphate. The product spontaneously undergoes cyclization to form 1-pyrroline-5-carboxylate.</text>
</comment>
<comment type="catalytic activity">
    <reaction evidence="1">
        <text>L-glutamate 5-semialdehyde + phosphate + NADP(+) = L-glutamyl 5-phosphate + NADPH + H(+)</text>
        <dbReference type="Rhea" id="RHEA:19541"/>
        <dbReference type="ChEBI" id="CHEBI:15378"/>
        <dbReference type="ChEBI" id="CHEBI:43474"/>
        <dbReference type="ChEBI" id="CHEBI:57783"/>
        <dbReference type="ChEBI" id="CHEBI:58066"/>
        <dbReference type="ChEBI" id="CHEBI:58274"/>
        <dbReference type="ChEBI" id="CHEBI:58349"/>
        <dbReference type="EC" id="1.2.1.41"/>
    </reaction>
</comment>
<comment type="pathway">
    <text evidence="1">Amino-acid biosynthesis; L-proline biosynthesis; L-glutamate 5-semialdehyde from L-glutamate: step 2/2.</text>
</comment>
<comment type="subcellular location">
    <subcellularLocation>
        <location evidence="1">Cytoplasm</location>
    </subcellularLocation>
</comment>
<comment type="similarity">
    <text evidence="1">Belongs to the gamma-glutamyl phosphate reductase family.</text>
</comment>
<keyword id="KW-0028">Amino-acid biosynthesis</keyword>
<keyword id="KW-0963">Cytoplasm</keyword>
<keyword id="KW-0521">NADP</keyword>
<keyword id="KW-0560">Oxidoreductase</keyword>
<keyword id="KW-0641">Proline biosynthesis</keyword>
<keyword id="KW-1185">Reference proteome</keyword>
<evidence type="ECO:0000255" key="1">
    <source>
        <dbReference type="HAMAP-Rule" id="MF_00412"/>
    </source>
</evidence>
<name>PROA_NOCFA</name>